<name>CST9P_HUMAN</name>
<protein>
    <recommendedName>
        <fullName>Putative cystatin-9-like protein CST9LP1</fullName>
    </recommendedName>
    <alternativeName>
        <fullName>Cystatin-9-like pseudogene 1</fullName>
    </alternativeName>
</protein>
<accession>Q5W188</accession>
<gene>
    <name type="primary">CST9LP1</name>
</gene>
<proteinExistence type="uncertain"/>
<comment type="subcellular location">
    <subcellularLocation>
        <location evidence="3">Secreted</location>
    </subcellularLocation>
</comment>
<comment type="similarity">
    <text evidence="3">Belongs to the cystatin family.</text>
</comment>
<comment type="caution">
    <text evidence="3">Could be the product of a pseudogene.</text>
</comment>
<organism>
    <name type="scientific">Homo sapiens</name>
    <name type="common">Human</name>
    <dbReference type="NCBI Taxonomy" id="9606"/>
    <lineage>
        <taxon>Eukaryota</taxon>
        <taxon>Metazoa</taxon>
        <taxon>Chordata</taxon>
        <taxon>Craniata</taxon>
        <taxon>Vertebrata</taxon>
        <taxon>Euteleostomi</taxon>
        <taxon>Mammalia</taxon>
        <taxon>Eutheria</taxon>
        <taxon>Euarchontoglires</taxon>
        <taxon>Primates</taxon>
        <taxon>Haplorrhini</taxon>
        <taxon>Catarrhini</taxon>
        <taxon>Hominidae</taxon>
        <taxon>Homo</taxon>
    </lineage>
</organism>
<dbReference type="EMBL" id="AL121894">
    <property type="status" value="NOT_ANNOTATED_CDS"/>
    <property type="molecule type" value="Genomic_DNA"/>
</dbReference>
<dbReference type="SMR" id="Q5W188"/>
<dbReference type="FunCoup" id="Q5W188">
    <property type="interactions" value="90"/>
</dbReference>
<dbReference type="GlyCosmos" id="Q5W188">
    <property type="glycosylation" value="2 sites, No reported glycans"/>
</dbReference>
<dbReference type="GlyGen" id="Q5W188">
    <property type="glycosylation" value="2 sites"/>
</dbReference>
<dbReference type="iPTMnet" id="Q5W188"/>
<dbReference type="PhosphoSitePlus" id="Q5W188"/>
<dbReference type="BioMuta" id="HGNC:39552"/>
<dbReference type="DMDM" id="74748038"/>
<dbReference type="MassIVE" id="Q5W188"/>
<dbReference type="TopDownProteomics" id="Q5W188"/>
<dbReference type="AGR" id="HGNC:39552"/>
<dbReference type="GeneCards" id="CST9LP1"/>
<dbReference type="HGNC" id="HGNC:39552">
    <property type="gene designation" value="CST9LP1"/>
</dbReference>
<dbReference type="neXtProt" id="NX_Q5W188"/>
<dbReference type="InParanoid" id="Q5W188"/>
<dbReference type="PAN-GO" id="Q5W188">
    <property type="GO annotations" value="2 GO annotations based on evolutionary models"/>
</dbReference>
<dbReference type="PhylomeDB" id="Q5W188"/>
<dbReference type="Pharos" id="Q5W188">
    <property type="development level" value="Tdark"/>
</dbReference>
<dbReference type="Proteomes" id="UP000005640">
    <property type="component" value="Unplaced"/>
</dbReference>
<dbReference type="RNAct" id="Q5W188">
    <property type="molecule type" value="protein"/>
</dbReference>
<dbReference type="GO" id="GO:0005615">
    <property type="term" value="C:extracellular space"/>
    <property type="evidence" value="ECO:0000314"/>
    <property type="project" value="UniProtKB"/>
</dbReference>
<dbReference type="GO" id="GO:0004869">
    <property type="term" value="F:cysteine-type endopeptidase inhibitor activity"/>
    <property type="evidence" value="ECO:0007669"/>
    <property type="project" value="UniProtKB-KW"/>
</dbReference>
<dbReference type="GO" id="GO:0019730">
    <property type="term" value="P:antimicrobial humoral response"/>
    <property type="evidence" value="ECO:0000318"/>
    <property type="project" value="GO_Central"/>
</dbReference>
<dbReference type="CDD" id="cd00042">
    <property type="entry name" value="CY"/>
    <property type="match status" value="1"/>
</dbReference>
<dbReference type="FunFam" id="3.10.450.10:FF:000017">
    <property type="entry name" value="CST9 isoform 1"/>
    <property type="match status" value="1"/>
</dbReference>
<dbReference type="Gene3D" id="3.10.450.10">
    <property type="match status" value="1"/>
</dbReference>
<dbReference type="InterPro" id="IPR043250">
    <property type="entry name" value="CST9-like"/>
</dbReference>
<dbReference type="InterPro" id="IPR000010">
    <property type="entry name" value="Cystatin_dom"/>
</dbReference>
<dbReference type="InterPro" id="IPR046350">
    <property type="entry name" value="Cystatin_sf"/>
</dbReference>
<dbReference type="PANTHER" id="PTHR46945">
    <property type="entry name" value="CYSTATIN-9-LIKE"/>
    <property type="match status" value="1"/>
</dbReference>
<dbReference type="PANTHER" id="PTHR46945:SF2">
    <property type="entry name" value="CYSTATIN-9-LIKE PROTEIN CST9LP1-RELATED"/>
    <property type="match status" value="1"/>
</dbReference>
<dbReference type="Pfam" id="PF00031">
    <property type="entry name" value="Cystatin"/>
    <property type="match status" value="1"/>
</dbReference>
<dbReference type="SUPFAM" id="SSF54403">
    <property type="entry name" value="Cystatin/monellin"/>
    <property type="match status" value="1"/>
</dbReference>
<reference key="1">
    <citation type="journal article" date="2001" name="Nature">
        <title>The DNA sequence and comparative analysis of human chromosome 20.</title>
        <authorList>
            <person name="Deloukas P."/>
            <person name="Matthews L.H."/>
            <person name="Ashurst J.L."/>
            <person name="Burton J."/>
            <person name="Gilbert J.G.R."/>
            <person name="Jones M."/>
            <person name="Stavrides G."/>
            <person name="Almeida J.P."/>
            <person name="Babbage A.K."/>
            <person name="Bagguley C.L."/>
            <person name="Bailey J."/>
            <person name="Barlow K.F."/>
            <person name="Bates K.N."/>
            <person name="Beard L.M."/>
            <person name="Beare D.M."/>
            <person name="Beasley O.P."/>
            <person name="Bird C.P."/>
            <person name="Blakey S.E."/>
            <person name="Bridgeman A.M."/>
            <person name="Brown A.J."/>
            <person name="Buck D."/>
            <person name="Burrill W.D."/>
            <person name="Butler A.P."/>
            <person name="Carder C."/>
            <person name="Carter N.P."/>
            <person name="Chapman J.C."/>
            <person name="Clamp M."/>
            <person name="Clark G."/>
            <person name="Clark L.N."/>
            <person name="Clark S.Y."/>
            <person name="Clee C.M."/>
            <person name="Clegg S."/>
            <person name="Cobley V.E."/>
            <person name="Collier R.E."/>
            <person name="Connor R.E."/>
            <person name="Corby N.R."/>
            <person name="Coulson A."/>
            <person name="Coville G.J."/>
            <person name="Deadman R."/>
            <person name="Dhami P.D."/>
            <person name="Dunn M."/>
            <person name="Ellington A.G."/>
            <person name="Frankland J.A."/>
            <person name="Fraser A."/>
            <person name="French L."/>
            <person name="Garner P."/>
            <person name="Grafham D.V."/>
            <person name="Griffiths C."/>
            <person name="Griffiths M.N.D."/>
            <person name="Gwilliam R."/>
            <person name="Hall R.E."/>
            <person name="Hammond S."/>
            <person name="Harley J.L."/>
            <person name="Heath P.D."/>
            <person name="Ho S."/>
            <person name="Holden J.L."/>
            <person name="Howden P.J."/>
            <person name="Huckle E."/>
            <person name="Hunt A.R."/>
            <person name="Hunt S.E."/>
            <person name="Jekosch K."/>
            <person name="Johnson C.M."/>
            <person name="Johnson D."/>
            <person name="Kay M.P."/>
            <person name="Kimberley A.M."/>
            <person name="King A."/>
            <person name="Knights A."/>
            <person name="Laird G.K."/>
            <person name="Lawlor S."/>
            <person name="Lehvaeslaiho M.H."/>
            <person name="Leversha M.A."/>
            <person name="Lloyd C."/>
            <person name="Lloyd D.M."/>
            <person name="Lovell J.D."/>
            <person name="Marsh V.L."/>
            <person name="Martin S.L."/>
            <person name="McConnachie L.J."/>
            <person name="McLay K."/>
            <person name="McMurray A.A."/>
            <person name="Milne S.A."/>
            <person name="Mistry D."/>
            <person name="Moore M.J.F."/>
            <person name="Mullikin J.C."/>
            <person name="Nickerson T."/>
            <person name="Oliver K."/>
            <person name="Parker A."/>
            <person name="Patel R."/>
            <person name="Pearce T.A.V."/>
            <person name="Peck A.I."/>
            <person name="Phillimore B.J.C.T."/>
            <person name="Prathalingam S.R."/>
            <person name="Plumb R.W."/>
            <person name="Ramsay H."/>
            <person name="Rice C.M."/>
            <person name="Ross M.T."/>
            <person name="Scott C.E."/>
            <person name="Sehra H.K."/>
            <person name="Shownkeen R."/>
            <person name="Sims S."/>
            <person name="Skuce C.D."/>
            <person name="Smith M.L."/>
            <person name="Soderlund C."/>
            <person name="Steward C.A."/>
            <person name="Sulston J.E."/>
            <person name="Swann R.M."/>
            <person name="Sycamore N."/>
            <person name="Taylor R."/>
            <person name="Tee L."/>
            <person name="Thomas D.W."/>
            <person name="Thorpe A."/>
            <person name="Tracey A."/>
            <person name="Tromans A.C."/>
            <person name="Vaudin M."/>
            <person name="Wall M."/>
            <person name="Wallis J.M."/>
            <person name="Whitehead S.L."/>
            <person name="Whittaker P."/>
            <person name="Willey D.L."/>
            <person name="Williams L."/>
            <person name="Williams S.A."/>
            <person name="Wilming L."/>
            <person name="Wray P.W."/>
            <person name="Hubbard T."/>
            <person name="Durbin R.M."/>
            <person name="Bentley D.R."/>
            <person name="Beck S."/>
            <person name="Rogers J."/>
        </authorList>
    </citation>
    <scope>NUCLEOTIDE SEQUENCE [LARGE SCALE GENOMIC DNA]</scope>
</reference>
<keyword id="KW-1015">Disulfide bond</keyword>
<keyword id="KW-0325">Glycoprotein</keyword>
<keyword id="KW-0646">Protease inhibitor</keyword>
<keyword id="KW-1185">Reference proteome</keyword>
<keyword id="KW-0964">Secreted</keyword>
<keyword id="KW-0732">Signal</keyword>
<keyword id="KW-0789">Thiol protease inhibitor</keyword>
<evidence type="ECO:0000250" key="1"/>
<evidence type="ECO:0000255" key="2"/>
<evidence type="ECO:0000305" key="3"/>
<sequence>MWSLPPSRALSCAPLLLLFSFQFLVTYAWRFQEEEEWNDQKQIAVYLPPTLEFAVYTFNKQSKDWYAYKLVPVLASWKEQGYDKMTFSMNLQLGRTMCGKFEDDIDNCPFQESPELNNTCTCFFTIGIEPWRTRFDLWNKTCSGGHS</sequence>
<feature type="signal peptide" evidence="2">
    <location>
        <begin position="1"/>
        <end position="28"/>
    </location>
</feature>
<feature type="chain" id="PRO_0000285800" description="Putative cystatin-9-like protein CST9LP1">
    <location>
        <begin position="29"/>
        <end position="147"/>
    </location>
</feature>
<feature type="glycosylation site" description="N-linked (GlcNAc...) asparagine" evidence="2">
    <location>
        <position position="117"/>
    </location>
</feature>
<feature type="glycosylation site" description="N-linked (GlcNAc...) asparagine" evidence="2">
    <location>
        <position position="139"/>
    </location>
</feature>
<feature type="disulfide bond" evidence="1">
    <location>
        <begin position="98"/>
        <end position="108"/>
    </location>
</feature>
<feature type="disulfide bond" evidence="1">
    <location>
        <begin position="122"/>
        <end position="142"/>
    </location>
</feature>